<accession>Q9QZU7</accession>
<organism>
    <name type="scientific">Rattus norvegicus</name>
    <name type="common">Rat</name>
    <dbReference type="NCBI Taxonomy" id="10116"/>
    <lineage>
        <taxon>Eukaryota</taxon>
        <taxon>Metazoa</taxon>
        <taxon>Chordata</taxon>
        <taxon>Craniata</taxon>
        <taxon>Vertebrata</taxon>
        <taxon>Euteleostomi</taxon>
        <taxon>Mammalia</taxon>
        <taxon>Eutheria</taxon>
        <taxon>Euarchontoglires</taxon>
        <taxon>Glires</taxon>
        <taxon>Rodentia</taxon>
        <taxon>Myomorpha</taxon>
        <taxon>Muroidea</taxon>
        <taxon>Muridae</taxon>
        <taxon>Murinae</taxon>
        <taxon>Rattus</taxon>
    </lineage>
</organism>
<name>BODG_RAT</name>
<protein>
    <recommendedName>
        <fullName>Gamma-butyrobetaine dioxygenase</fullName>
        <ecNumber>1.14.11.1</ecNumber>
    </recommendedName>
    <alternativeName>
        <fullName evidence="3">Gamma-butyrobetaine hydroxylase</fullName>
        <shortName>Gamma-BBH</shortName>
    </alternativeName>
    <alternativeName>
        <fullName>Gamma-butyrobetaine,2-oxoglutarate dioxygenase</fullName>
    </alternativeName>
</protein>
<gene>
    <name type="primary">Bbox1</name>
    <name evidence="3" type="synonym">Bbh</name>
</gene>
<sequence>MHCAILKAEAVDGARLMQIFWHDGAESLYPAVWLRDNCQCSDCYLHSAKARKLLLEALDVNIRMDDLTFDQKKVYITWPNGHYSEFEANWLKKRCFSQEARAGLQGELFLPECQYWGSELQLPTLNFEDVLNDDDHAYKWLSSLKKVGIVRLTGAADKRGEIIKLGKRIGFLYLTFYGHTWQVQDKIDANNVAYTTGKLSFHTDYPALHHPPGVQLLHCIKQTVTGGDSEIVDGFNVCQKLKEKNPQAFSILSSTFVDFTDIGVDYCDFSVQSKHKIIELDDKGQVVRINFNNATRDTVFDVPIERVQPFYAALKEFVDLMNSKEYKYTFKMNPGDVITFDNWRLLHGRRSYEAGTEISRHLEGAYADWDVVMSRLRILRQRVMNGN</sequence>
<keyword id="KW-0124">Carnitine biosynthesis</keyword>
<keyword id="KW-0963">Cytoplasm</keyword>
<keyword id="KW-0223">Dioxygenase</keyword>
<keyword id="KW-0903">Direct protein sequencing</keyword>
<keyword id="KW-0408">Iron</keyword>
<keyword id="KW-0479">Metal-binding</keyword>
<keyword id="KW-0560">Oxidoreductase</keyword>
<keyword id="KW-0597">Phosphoprotein</keyword>
<keyword id="KW-1185">Reference proteome</keyword>
<keyword id="KW-0862">Zinc</keyword>
<dbReference type="EC" id="1.14.11.1"/>
<dbReference type="EMBL" id="AF160958">
    <property type="protein sequence ID" value="AAD53264.1"/>
    <property type="molecule type" value="mRNA"/>
</dbReference>
<dbReference type="RefSeq" id="NP_001400104.1">
    <property type="nucleotide sequence ID" value="NM_001413175.2"/>
</dbReference>
<dbReference type="RefSeq" id="NP_001416384.1">
    <property type="nucleotide sequence ID" value="NM_001429455.1"/>
</dbReference>
<dbReference type="RefSeq" id="NP_001416385.1">
    <property type="nucleotide sequence ID" value="NM_001429456.1"/>
</dbReference>
<dbReference type="RefSeq" id="NP_001416386.1">
    <property type="nucleotide sequence ID" value="NM_001429457.1"/>
</dbReference>
<dbReference type="RefSeq" id="NP_001416387.1">
    <property type="nucleotide sequence ID" value="NM_001429458.1"/>
</dbReference>
<dbReference type="RefSeq" id="NP_072151.1">
    <property type="nucleotide sequence ID" value="NM_022629.3"/>
</dbReference>
<dbReference type="RefSeq" id="XP_017447515.1">
    <property type="nucleotide sequence ID" value="XM_017592026.1"/>
</dbReference>
<dbReference type="RefSeq" id="XP_038961730.1">
    <property type="nucleotide sequence ID" value="XM_039105802.2"/>
</dbReference>
<dbReference type="SMR" id="Q9QZU7"/>
<dbReference type="FunCoup" id="Q9QZU7">
    <property type="interactions" value="97"/>
</dbReference>
<dbReference type="STRING" id="10116.ENSRNOP00000073497"/>
<dbReference type="iPTMnet" id="Q9QZU7"/>
<dbReference type="PhosphoSitePlus" id="Q9QZU7"/>
<dbReference type="PaxDb" id="10116-ENSRNOP00000006197"/>
<dbReference type="Ensembl" id="ENSRNOT00000080175.2">
    <property type="protein sequence ID" value="ENSRNOP00000073497.2"/>
    <property type="gene ID" value="ENSRNOG00000059519.2"/>
</dbReference>
<dbReference type="GeneID" id="64564"/>
<dbReference type="KEGG" id="rno:64564"/>
<dbReference type="UCSC" id="RGD:619756">
    <property type="organism name" value="rat"/>
</dbReference>
<dbReference type="AGR" id="RGD:619756"/>
<dbReference type="CTD" id="8424"/>
<dbReference type="RGD" id="619756">
    <property type="gene designation" value="Bbox1"/>
</dbReference>
<dbReference type="eggNOG" id="KOG3888">
    <property type="taxonomic scope" value="Eukaryota"/>
</dbReference>
<dbReference type="GeneTree" id="ENSGT00530000063582"/>
<dbReference type="InParanoid" id="Q9QZU7"/>
<dbReference type="OMA" id="VHITWPN"/>
<dbReference type="OrthoDB" id="406634at2759"/>
<dbReference type="PhylomeDB" id="Q9QZU7"/>
<dbReference type="TreeFam" id="TF313805"/>
<dbReference type="BioCyc" id="MetaCyc:MONOMER-14431"/>
<dbReference type="BRENDA" id="1.14.11.1">
    <property type="organism ID" value="5301"/>
</dbReference>
<dbReference type="Reactome" id="R-RNO-71262">
    <property type="pathway name" value="Carnitine synthesis"/>
</dbReference>
<dbReference type="SABIO-RK" id="Q9QZU7"/>
<dbReference type="UniPathway" id="UPA00118"/>
<dbReference type="PRO" id="PR:Q9QZU7"/>
<dbReference type="Proteomes" id="UP000002494">
    <property type="component" value="Chromosome 3"/>
</dbReference>
<dbReference type="GO" id="GO:0005829">
    <property type="term" value="C:cytosol"/>
    <property type="evidence" value="ECO:0000266"/>
    <property type="project" value="RGD"/>
</dbReference>
<dbReference type="GO" id="GO:0005739">
    <property type="term" value="C:mitochondrion"/>
    <property type="evidence" value="ECO:0000318"/>
    <property type="project" value="GO_Central"/>
</dbReference>
<dbReference type="GO" id="GO:0008336">
    <property type="term" value="F:gamma-butyrobetaine dioxygenase activity"/>
    <property type="evidence" value="ECO:0000315"/>
    <property type="project" value="UniProtKB"/>
</dbReference>
<dbReference type="GO" id="GO:0042802">
    <property type="term" value="F:identical protein binding"/>
    <property type="evidence" value="ECO:0000266"/>
    <property type="project" value="RGD"/>
</dbReference>
<dbReference type="GO" id="GO:0005506">
    <property type="term" value="F:iron ion binding"/>
    <property type="evidence" value="ECO:0007669"/>
    <property type="project" value="InterPro"/>
</dbReference>
<dbReference type="GO" id="GO:0008270">
    <property type="term" value="F:zinc ion binding"/>
    <property type="evidence" value="ECO:0000250"/>
    <property type="project" value="UniProtKB"/>
</dbReference>
<dbReference type="GO" id="GO:0045329">
    <property type="term" value="P:carnitine biosynthetic process"/>
    <property type="evidence" value="ECO:0000250"/>
    <property type="project" value="UniProtKB"/>
</dbReference>
<dbReference type="CDD" id="cd00250">
    <property type="entry name" value="CAS_like"/>
    <property type="match status" value="1"/>
</dbReference>
<dbReference type="FunFam" id="3.60.130.10:FF:000015">
    <property type="entry name" value="Gamma-butyrobetaine dioxygenase"/>
    <property type="match status" value="1"/>
</dbReference>
<dbReference type="FunFam" id="3.30.2020.30:FF:000002">
    <property type="entry name" value="Putative gamma-butyrobetaine dioxygenase"/>
    <property type="match status" value="1"/>
</dbReference>
<dbReference type="Gene3D" id="3.30.2020.30">
    <property type="match status" value="1"/>
</dbReference>
<dbReference type="Gene3D" id="3.60.130.10">
    <property type="entry name" value="Clavaminate synthase-like"/>
    <property type="match status" value="1"/>
</dbReference>
<dbReference type="InterPro" id="IPR050411">
    <property type="entry name" value="AlphaKG_dependent_hydroxylases"/>
</dbReference>
<dbReference type="InterPro" id="IPR012775">
    <property type="entry name" value="GBBH-like"/>
</dbReference>
<dbReference type="InterPro" id="IPR010376">
    <property type="entry name" value="GBBH-like_N"/>
</dbReference>
<dbReference type="InterPro" id="IPR038492">
    <property type="entry name" value="GBBH-like_N_sf"/>
</dbReference>
<dbReference type="InterPro" id="IPR042098">
    <property type="entry name" value="TauD-like_sf"/>
</dbReference>
<dbReference type="InterPro" id="IPR003819">
    <property type="entry name" value="TauD/TfdA-like"/>
</dbReference>
<dbReference type="NCBIfam" id="TIGR02409">
    <property type="entry name" value="carnitine_bodg"/>
    <property type="match status" value="1"/>
</dbReference>
<dbReference type="PANTHER" id="PTHR10696:SF33">
    <property type="entry name" value="GAMMA-BUTYROBETAINE DIOXYGENASE"/>
    <property type="match status" value="1"/>
</dbReference>
<dbReference type="PANTHER" id="PTHR10696">
    <property type="entry name" value="GAMMA-BUTYROBETAINE HYDROXYLASE-RELATED"/>
    <property type="match status" value="1"/>
</dbReference>
<dbReference type="Pfam" id="PF06155">
    <property type="entry name" value="GBBH-like_N"/>
    <property type="match status" value="1"/>
</dbReference>
<dbReference type="Pfam" id="PF02668">
    <property type="entry name" value="TauD"/>
    <property type="match status" value="1"/>
</dbReference>
<dbReference type="SUPFAM" id="SSF51197">
    <property type="entry name" value="Clavaminate synthase-like"/>
    <property type="match status" value="1"/>
</dbReference>
<comment type="function">
    <text>Catalyzes the formation of L-carnitine from gamma-butyrobetaine.</text>
</comment>
<comment type="catalytic activity">
    <reaction>
        <text>4-(trimethylamino)butanoate + 2-oxoglutarate + O2 = carnitine + succinate + CO2</text>
        <dbReference type="Rhea" id="RHEA:24028"/>
        <dbReference type="ChEBI" id="CHEBI:15379"/>
        <dbReference type="ChEBI" id="CHEBI:16244"/>
        <dbReference type="ChEBI" id="CHEBI:16526"/>
        <dbReference type="ChEBI" id="CHEBI:16810"/>
        <dbReference type="ChEBI" id="CHEBI:17126"/>
        <dbReference type="ChEBI" id="CHEBI:30031"/>
        <dbReference type="EC" id="1.14.11.1"/>
    </reaction>
</comment>
<comment type="cofactor">
    <cofactor evidence="1">
        <name>Fe(2+)</name>
        <dbReference type="ChEBI" id="CHEBI:29033"/>
    </cofactor>
    <text evidence="1">Binds 1 Fe(2+) ion per subunit.</text>
</comment>
<comment type="cofactor">
    <cofactor>
        <name>L-ascorbate</name>
        <dbReference type="ChEBI" id="CHEBI:38290"/>
    </cofactor>
</comment>
<comment type="pathway">
    <text>Amine and polyamine biosynthesis; carnitine biosynthesis.</text>
</comment>
<comment type="subcellular location">
    <subcellularLocation>
        <location>Cytoplasm</location>
    </subcellularLocation>
</comment>
<comment type="tissue specificity">
    <text evidence="2">Expressed in the liver and in some extend in the testis and the epididymis.</text>
</comment>
<comment type="developmental stage">
    <text evidence="2">Undetectable during the perinatal period. During development, expression appears after the weaning of the young rat and reaches a maximal expression at the adult stage.</text>
</comment>
<comment type="similarity">
    <text evidence="4">Belongs to the gamma-BBH/TMLD family.</text>
</comment>
<evidence type="ECO:0000250" key="1"/>
<evidence type="ECO:0000269" key="2">
    <source>
    </source>
</evidence>
<evidence type="ECO:0000303" key="3">
    <source>
    </source>
</evidence>
<evidence type="ECO:0000305" key="4"/>
<evidence type="ECO:0007744" key="5">
    <source>
    </source>
</evidence>
<feature type="chain" id="PRO_0000207087" description="Gamma-butyrobetaine dioxygenase">
    <location>
        <begin position="1"/>
        <end position="387"/>
    </location>
</feature>
<feature type="binding site" evidence="1">
    <location>
        <position position="38"/>
    </location>
    <ligand>
        <name>Zn(2+)</name>
        <dbReference type="ChEBI" id="CHEBI:29105"/>
    </ligand>
</feature>
<feature type="binding site" evidence="1">
    <location>
        <position position="40"/>
    </location>
    <ligand>
        <name>Zn(2+)</name>
        <dbReference type="ChEBI" id="CHEBI:29105"/>
    </ligand>
</feature>
<feature type="binding site" evidence="1">
    <location>
        <position position="43"/>
    </location>
    <ligand>
        <name>Zn(2+)</name>
        <dbReference type="ChEBI" id="CHEBI:29105"/>
    </ligand>
</feature>
<feature type="binding site" evidence="1">
    <location>
        <position position="82"/>
    </location>
    <ligand>
        <name>Zn(2+)</name>
        <dbReference type="ChEBI" id="CHEBI:29105"/>
    </ligand>
</feature>
<feature type="binding site" evidence="1">
    <location>
        <position position="202"/>
    </location>
    <ligand>
        <name>Fe cation</name>
        <dbReference type="ChEBI" id="CHEBI:24875"/>
        <note>catalytic</note>
    </ligand>
</feature>
<feature type="binding site" evidence="1">
    <location>
        <position position="204"/>
    </location>
    <ligand>
        <name>Fe cation</name>
        <dbReference type="ChEBI" id="CHEBI:24875"/>
        <note>catalytic</note>
    </ligand>
</feature>
<feature type="binding site" evidence="1">
    <location>
        <position position="347"/>
    </location>
    <ligand>
        <name>Fe cation</name>
        <dbReference type="ChEBI" id="CHEBI:24875"/>
        <note>catalytic</note>
    </ligand>
</feature>
<feature type="modified residue" description="Phosphoserine" evidence="5">
    <location>
        <position position="351"/>
    </location>
</feature>
<reference key="1">
    <citation type="journal article" date="1999" name="Biochim. Biophys. Acta">
        <title>Molecular cloning and characterization of the cDNA encoding the rat liver gamma-butyrobetaine hydroxylase.</title>
        <authorList>
            <person name="Galland S."/>
            <person name="Le Borgne F."/>
            <person name="Bouchard F."/>
            <person name="Georges B."/>
            <person name="Clouet P."/>
            <person name="Grand-Jean F."/>
            <person name="Demarquoy J."/>
        </authorList>
    </citation>
    <scope>NUCLEOTIDE SEQUENCE [MRNA]</scope>
    <scope>CHARACTERIZATION</scope>
    <scope>TISSUE SPECIFICITY</scope>
    <scope>DEVELOPMENTAL STAGE</scope>
    <source>
        <strain>Sprague-Dawley</strain>
        <tissue>Liver</tissue>
    </source>
</reference>
<reference key="2">
    <citation type="journal article" date="1998" name="Biochem. Biophys. Res. Commun.">
        <title>Carnitine biosynthesis: identification of the cDNA encoding human gamma-butyrobetaine hydroxylase.</title>
        <authorList>
            <person name="Vaz F.M."/>
            <person name="van Gool S."/>
            <person name="Ofman R."/>
            <person name="Ijlst L."/>
            <person name="Wanders R.J.A."/>
        </authorList>
    </citation>
    <scope>PARTIAL PROTEIN SEQUENCE</scope>
    <source>
        <tissue>Liver</tissue>
    </source>
</reference>
<reference key="3">
    <citation type="journal article" date="2012" name="Nat. Commun.">
        <title>Quantitative maps of protein phosphorylation sites across 14 different rat organs and tissues.</title>
        <authorList>
            <person name="Lundby A."/>
            <person name="Secher A."/>
            <person name="Lage K."/>
            <person name="Nordsborg N.B."/>
            <person name="Dmytriyev A."/>
            <person name="Lundby C."/>
            <person name="Olsen J.V."/>
        </authorList>
    </citation>
    <scope>PHOSPHORYLATION [LARGE SCALE ANALYSIS] AT SER-351</scope>
    <scope>IDENTIFICATION BY MASS SPECTROMETRY [LARGE SCALE ANALYSIS]</scope>
</reference>
<proteinExistence type="evidence at protein level"/>